<dbReference type="EC" id="1.15.1.1" evidence="1"/>
<dbReference type="EMBL" id="Z99177">
    <property type="protein sequence ID" value="CAB16321.1"/>
    <property type="molecule type" value="Genomic_DNA"/>
</dbReference>
<dbReference type="SMR" id="O54266"/>
<dbReference type="STRING" id="873448.STRPO_1972"/>
<dbReference type="GO" id="GO:0005737">
    <property type="term" value="C:cytoplasm"/>
    <property type="evidence" value="ECO:0007669"/>
    <property type="project" value="TreeGrafter"/>
</dbReference>
<dbReference type="GO" id="GO:0046872">
    <property type="term" value="F:metal ion binding"/>
    <property type="evidence" value="ECO:0007669"/>
    <property type="project" value="UniProtKB-KW"/>
</dbReference>
<dbReference type="GO" id="GO:0004784">
    <property type="term" value="F:superoxide dismutase activity"/>
    <property type="evidence" value="ECO:0007669"/>
    <property type="project" value="UniProtKB-EC"/>
</dbReference>
<dbReference type="FunFam" id="1.10.287.990:FF:000001">
    <property type="entry name" value="Superoxide dismutase"/>
    <property type="match status" value="1"/>
</dbReference>
<dbReference type="Gene3D" id="1.10.287.990">
    <property type="entry name" value="Fe,Mn superoxide dismutase (SOD) domain"/>
    <property type="match status" value="1"/>
</dbReference>
<dbReference type="Gene3D" id="3.55.40.20">
    <property type="entry name" value="Iron/manganese superoxide dismutase, C-terminal domain"/>
    <property type="match status" value="1"/>
</dbReference>
<dbReference type="InterPro" id="IPR001189">
    <property type="entry name" value="Mn/Fe_SOD"/>
</dbReference>
<dbReference type="InterPro" id="IPR019832">
    <property type="entry name" value="Mn/Fe_SOD_C"/>
</dbReference>
<dbReference type="InterPro" id="IPR019831">
    <property type="entry name" value="Mn/Fe_SOD_N"/>
</dbReference>
<dbReference type="InterPro" id="IPR036324">
    <property type="entry name" value="Mn/Fe_SOD_N_sf"/>
</dbReference>
<dbReference type="InterPro" id="IPR036314">
    <property type="entry name" value="SOD_C_sf"/>
</dbReference>
<dbReference type="PANTHER" id="PTHR43595">
    <property type="entry name" value="37S RIBOSOMAL PROTEIN S26, MITOCHONDRIAL"/>
    <property type="match status" value="1"/>
</dbReference>
<dbReference type="PANTHER" id="PTHR43595:SF2">
    <property type="entry name" value="SMALL RIBOSOMAL SUBUNIT PROTEIN MS42"/>
    <property type="match status" value="1"/>
</dbReference>
<dbReference type="Pfam" id="PF02777">
    <property type="entry name" value="Sod_Fe_C"/>
    <property type="match status" value="1"/>
</dbReference>
<dbReference type="Pfam" id="PF00081">
    <property type="entry name" value="Sod_Fe_N"/>
    <property type="match status" value="1"/>
</dbReference>
<dbReference type="PRINTS" id="PR01703">
    <property type="entry name" value="MNSODISMTASE"/>
</dbReference>
<dbReference type="SUPFAM" id="SSF54719">
    <property type="entry name" value="Fe,Mn superoxide dismutase (SOD), C-terminal domain"/>
    <property type="match status" value="1"/>
</dbReference>
<dbReference type="SUPFAM" id="SSF46609">
    <property type="entry name" value="Fe,Mn superoxide dismutase (SOD), N-terminal domain"/>
    <property type="match status" value="1"/>
</dbReference>
<evidence type="ECO:0000250" key="1">
    <source>
        <dbReference type="UniProtKB" id="P80293"/>
    </source>
</evidence>
<evidence type="ECO:0000305" key="2"/>
<protein>
    <recommendedName>
        <fullName>Superoxide dismutase [Mn/Fe]</fullName>
        <ecNumber evidence="1">1.15.1.1</ecNumber>
    </recommendedName>
</protein>
<sequence>QFDKETMILHHDKHHATYVANANAALEKHPEIGENLEELLADVSAIPEDIRQALVNNGGGHLNHALFWELLSPEKTEVTSDVASAIDEAFGSFESFKDAFTTAATSRFGSGWAWLVVNKEGKLEVMSTANQDTPISEGKQPILGL</sequence>
<keyword id="KW-0408">Iron</keyword>
<keyword id="KW-0464">Manganese</keyword>
<keyword id="KW-0479">Metal-binding</keyword>
<keyword id="KW-0560">Oxidoreductase</keyword>
<gene>
    <name type="primary">sodA</name>
</gene>
<proteinExistence type="inferred from homology"/>
<feature type="chain" id="PRO_0000160099" description="Superoxide dismutase [Mn/Fe]">
    <location>
        <begin position="1" status="less than"/>
        <end position="145" status="greater than"/>
    </location>
</feature>
<feature type="binding site" evidence="1">
    <location>
        <position position="10"/>
    </location>
    <ligand>
        <name>Fe(3+)</name>
        <dbReference type="ChEBI" id="CHEBI:29034"/>
    </ligand>
</feature>
<feature type="binding site" evidence="1">
    <location>
        <position position="10"/>
    </location>
    <ligand>
        <name>Mn(2+)</name>
        <dbReference type="ChEBI" id="CHEBI:29035"/>
    </ligand>
</feature>
<feature type="binding site" evidence="1">
    <location>
        <position position="64"/>
    </location>
    <ligand>
        <name>Fe(3+)</name>
        <dbReference type="ChEBI" id="CHEBI:29034"/>
    </ligand>
</feature>
<feature type="binding site" evidence="1">
    <location>
        <position position="64"/>
    </location>
    <ligand>
        <name>Mn(2+)</name>
        <dbReference type="ChEBI" id="CHEBI:29035"/>
    </ligand>
</feature>
<feature type="non-terminal residue">
    <location>
        <position position="1"/>
    </location>
</feature>
<feature type="non-terminal residue">
    <location>
        <position position="145"/>
    </location>
</feature>
<accession>O54266</accession>
<comment type="function">
    <text evidence="1">Destroys superoxide anion radicals which are normally produced within the cells and which are toxic to biological systems. Catalyzes the dismutation of superoxide anion radicals into O2 and H2O2 by successive reduction and oxidation of the transition metal ion at the active site.</text>
</comment>
<comment type="catalytic activity">
    <reaction evidence="1">
        <text>2 superoxide + 2 H(+) = H2O2 + O2</text>
        <dbReference type="Rhea" id="RHEA:20696"/>
        <dbReference type="ChEBI" id="CHEBI:15378"/>
        <dbReference type="ChEBI" id="CHEBI:15379"/>
        <dbReference type="ChEBI" id="CHEBI:16240"/>
        <dbReference type="ChEBI" id="CHEBI:18421"/>
        <dbReference type="EC" id="1.15.1.1"/>
    </reaction>
    <physiologicalReaction direction="left-to-right" evidence="1">
        <dbReference type="Rhea" id="RHEA:20697"/>
    </physiologicalReaction>
</comment>
<comment type="cofactor">
    <cofactor evidence="1">
        <name>Mn(2+)</name>
        <dbReference type="ChEBI" id="CHEBI:29035"/>
    </cofactor>
    <cofactor evidence="1">
        <name>Fe(3+)</name>
        <dbReference type="ChEBI" id="CHEBI:29034"/>
    </cofactor>
    <text evidence="1">Binds 1 Mn(2+) or Fe(3+) ion per subunit.</text>
</comment>
<comment type="similarity">
    <text evidence="2">Belongs to the iron/manganese superoxide dismutase family.</text>
</comment>
<organism>
    <name type="scientific">Streptococcus porcinus</name>
    <dbReference type="NCBI Taxonomy" id="1340"/>
    <lineage>
        <taxon>Bacteria</taxon>
        <taxon>Bacillati</taxon>
        <taxon>Bacillota</taxon>
        <taxon>Bacilli</taxon>
        <taxon>Lactobacillales</taxon>
        <taxon>Streptococcaceae</taxon>
        <taxon>Streptococcus</taxon>
    </lineage>
</organism>
<name>SODM_STRPO</name>
<reference key="1">
    <citation type="journal article" date="1998" name="J. Clin. Microbiol.">
        <title>Identification of streptococci to species level by sequencing the gene encoding the manganese-dependent superoxide dismutase.</title>
        <authorList>
            <person name="Poyart C."/>
            <person name="Quesne G."/>
            <person name="Coulon S."/>
            <person name="Berche P."/>
            <person name="Trieu-Cuot P."/>
        </authorList>
    </citation>
    <scope>NUCLEOTIDE SEQUENCE [GENOMIC DNA]</scope>
    <source>
        <strain>ATCC 43138 / CIP 103218 / DSM 20725 / LMG 15980 / NCTC 10999</strain>
    </source>
</reference>